<sequence>MAALFLKKLTLQTVKTENYCIRRCLGKYILQGPAPTQQPPRPSCLIHAKAFSTEDTQDEMTKKKKNETAFSSVGRKINERIIHVLDEQGNDLGHMHRANVIRLMAERDLRLVKRDASAEPPQYQLLTGAQIHQERLRLREAERAAPKPGPTLTKELTFSSNIGQHDLDTKSKQIQQWIEKKYKVQITVKKGKSADEPEDKMEEMCNRIVQTMSGIATFSSRPQPIRGGKAVMCVLRPLSKKEEAAWKAAPDTPRRDALNGGDGKDGASGVLPQ</sequence>
<gene>
    <name type="primary">MTIF3</name>
</gene>
<proteinExistence type="evidence at transcript level"/>
<protein>
    <recommendedName>
        <fullName>Translation initiation factor IF-3, mitochondrial</fullName>
        <shortName>IF-3(Mt)</shortName>
        <shortName>IF-3Mt</shortName>
        <shortName>IF3(mt)</shortName>
        <shortName>IF3mt</shortName>
    </recommendedName>
</protein>
<reference key="1">
    <citation type="submission" date="2005-11" db="EMBL/GenBank/DDBJ databases">
        <authorList>
            <consortium name="NIH - Mammalian Gene Collection (MGC) project"/>
        </authorList>
    </citation>
    <scope>NUCLEOTIDE SEQUENCE [LARGE SCALE MRNA]</scope>
    <source>
        <strain>Crossbred X Angus</strain>
        <tissue>Liver</tissue>
    </source>
</reference>
<feature type="transit peptide" description="Mitochondrion" evidence="1">
    <location>
        <begin position="1"/>
        <end position="32"/>
    </location>
</feature>
<feature type="propeptide" id="PRO_0000280034" description="Removed in mature form" evidence="1">
    <location>
        <begin position="33"/>
        <end position="92"/>
    </location>
</feature>
<feature type="chain" id="PRO_0000280035" description="Translation initiation factor IF-3, mitochondrial">
    <location>
        <begin position="93"/>
        <end position="273"/>
    </location>
</feature>
<feature type="region of interest" description="Disordered" evidence="2">
    <location>
        <begin position="242"/>
        <end position="273"/>
    </location>
</feature>
<feature type="compositionally biased region" description="Basic and acidic residues" evidence="2">
    <location>
        <begin position="252"/>
        <end position="265"/>
    </location>
</feature>
<dbReference type="EMBL" id="BC109845">
    <property type="protein sequence ID" value="AAI09846.1"/>
    <property type="molecule type" value="mRNA"/>
</dbReference>
<dbReference type="RefSeq" id="NP_001033155.1">
    <property type="nucleotide sequence ID" value="NM_001038066.2"/>
</dbReference>
<dbReference type="RefSeq" id="XP_005213827.1">
    <property type="nucleotide sequence ID" value="XM_005213770.3"/>
</dbReference>
<dbReference type="RefSeq" id="XP_005213829.1">
    <property type="nucleotide sequence ID" value="XM_005213772.3"/>
</dbReference>
<dbReference type="RefSeq" id="XP_005213830.1">
    <property type="nucleotide sequence ID" value="XM_005213773.3"/>
</dbReference>
<dbReference type="RefSeq" id="XP_015329307.1">
    <property type="nucleotide sequence ID" value="XM_015473821.1"/>
</dbReference>
<dbReference type="SMR" id="Q32KZ1"/>
<dbReference type="FunCoup" id="Q32KZ1">
    <property type="interactions" value="348"/>
</dbReference>
<dbReference type="STRING" id="9913.ENSBTAP00000027352"/>
<dbReference type="PaxDb" id="9913-ENSBTAP00000027352"/>
<dbReference type="GeneID" id="509987"/>
<dbReference type="KEGG" id="bta:509987"/>
<dbReference type="CTD" id="219402"/>
<dbReference type="eggNOG" id="ENOG502SBZS">
    <property type="taxonomic scope" value="Eukaryota"/>
</dbReference>
<dbReference type="HOGENOM" id="CLU_086230_0_1_1"/>
<dbReference type="InParanoid" id="Q32KZ1"/>
<dbReference type="OrthoDB" id="21573at2759"/>
<dbReference type="TreeFam" id="TF332326"/>
<dbReference type="Proteomes" id="UP000009136">
    <property type="component" value="Unplaced"/>
</dbReference>
<dbReference type="GO" id="GO:0005759">
    <property type="term" value="C:mitochondrial matrix"/>
    <property type="evidence" value="ECO:0000304"/>
    <property type="project" value="Reactome"/>
</dbReference>
<dbReference type="GO" id="GO:0005739">
    <property type="term" value="C:mitochondrion"/>
    <property type="evidence" value="ECO:0000250"/>
    <property type="project" value="BHF-UCL"/>
</dbReference>
<dbReference type="GO" id="GO:0043024">
    <property type="term" value="F:ribosomal small subunit binding"/>
    <property type="evidence" value="ECO:0000250"/>
    <property type="project" value="BHF-UCL"/>
</dbReference>
<dbReference type="GO" id="GO:0043022">
    <property type="term" value="F:ribosome binding"/>
    <property type="evidence" value="ECO:0000318"/>
    <property type="project" value="GO_Central"/>
</dbReference>
<dbReference type="GO" id="GO:0008135">
    <property type="term" value="F:translation factor activity, RNA binding"/>
    <property type="evidence" value="ECO:0000250"/>
    <property type="project" value="BHF-UCL"/>
</dbReference>
<dbReference type="GO" id="GO:0003743">
    <property type="term" value="F:translation initiation factor activity"/>
    <property type="evidence" value="ECO:0000318"/>
    <property type="project" value="GO_Central"/>
</dbReference>
<dbReference type="GO" id="GO:0070124">
    <property type="term" value="P:mitochondrial translational initiation"/>
    <property type="evidence" value="ECO:0000250"/>
    <property type="project" value="BHF-UCL"/>
</dbReference>
<dbReference type="GO" id="GO:0032790">
    <property type="term" value="P:ribosome disassembly"/>
    <property type="evidence" value="ECO:0000250"/>
    <property type="project" value="BHF-UCL"/>
</dbReference>
<dbReference type="FunFam" id="3.10.20.80:FF:000002">
    <property type="entry name" value="Mitochondrial translational initiation factor 3"/>
    <property type="match status" value="1"/>
</dbReference>
<dbReference type="FunFam" id="3.30.110.10:FF:000004">
    <property type="entry name" value="Translation initiation factor IF-3, mitochondrial"/>
    <property type="match status" value="1"/>
</dbReference>
<dbReference type="Gene3D" id="3.30.110.10">
    <property type="entry name" value="Translation initiation factor 3 (IF-3), C-terminal domain"/>
    <property type="match status" value="1"/>
</dbReference>
<dbReference type="Gene3D" id="3.10.20.80">
    <property type="entry name" value="Translation initiation factor 3 (IF-3), N-terminal domain"/>
    <property type="match status" value="1"/>
</dbReference>
<dbReference type="InterPro" id="IPR036788">
    <property type="entry name" value="T_IF-3_C_sf"/>
</dbReference>
<dbReference type="InterPro" id="IPR036787">
    <property type="entry name" value="T_IF-3_N_sf"/>
</dbReference>
<dbReference type="InterPro" id="IPR001288">
    <property type="entry name" value="Translation_initiation_fac_3"/>
</dbReference>
<dbReference type="InterPro" id="IPR019815">
    <property type="entry name" value="Translation_initiation_fac_3_C"/>
</dbReference>
<dbReference type="InterPro" id="IPR019814">
    <property type="entry name" value="Translation_initiation_fac_3_N"/>
</dbReference>
<dbReference type="PANTHER" id="PTHR10938">
    <property type="entry name" value="TRANSLATION INITIATION FACTOR IF-3"/>
    <property type="match status" value="1"/>
</dbReference>
<dbReference type="PANTHER" id="PTHR10938:SF0">
    <property type="entry name" value="TRANSLATION INITIATION FACTOR IF-3, MITOCHONDRIAL"/>
    <property type="match status" value="1"/>
</dbReference>
<dbReference type="Pfam" id="PF00707">
    <property type="entry name" value="IF3_C"/>
    <property type="match status" value="1"/>
</dbReference>
<dbReference type="Pfam" id="PF05198">
    <property type="entry name" value="IF3_N"/>
    <property type="match status" value="1"/>
</dbReference>
<dbReference type="SUPFAM" id="SSF55200">
    <property type="entry name" value="Translation initiation factor IF3, C-terminal domain"/>
    <property type="match status" value="1"/>
</dbReference>
<dbReference type="SUPFAM" id="SSF54364">
    <property type="entry name" value="Translation initiation factor IF3, N-terminal domain"/>
    <property type="match status" value="1"/>
</dbReference>
<keyword id="KW-0396">Initiation factor</keyword>
<keyword id="KW-0496">Mitochondrion</keyword>
<keyword id="KW-0648">Protein biosynthesis</keyword>
<keyword id="KW-1185">Reference proteome</keyword>
<keyword id="KW-0809">Transit peptide</keyword>
<accession>Q32KZ1</accession>
<comment type="function">
    <text evidence="1">IF-3 binds to the 28S ribosomal subunit and shifts the equilibrium between 55S ribosomes and their 39S and 28S subunits in favor of the free subunits, thus enhancing the availability of 28S subunits on which protein synthesis initiation begins.</text>
</comment>
<comment type="subcellular location">
    <subcellularLocation>
        <location evidence="3">Mitochondrion</location>
    </subcellularLocation>
</comment>
<comment type="similarity">
    <text evidence="3">Belongs to the IF-3 family.</text>
</comment>
<evidence type="ECO:0000250" key="1"/>
<evidence type="ECO:0000256" key="2">
    <source>
        <dbReference type="SAM" id="MobiDB-lite"/>
    </source>
</evidence>
<evidence type="ECO:0000305" key="3"/>
<name>IF3M_BOVIN</name>
<organism>
    <name type="scientific">Bos taurus</name>
    <name type="common">Bovine</name>
    <dbReference type="NCBI Taxonomy" id="9913"/>
    <lineage>
        <taxon>Eukaryota</taxon>
        <taxon>Metazoa</taxon>
        <taxon>Chordata</taxon>
        <taxon>Craniata</taxon>
        <taxon>Vertebrata</taxon>
        <taxon>Euteleostomi</taxon>
        <taxon>Mammalia</taxon>
        <taxon>Eutheria</taxon>
        <taxon>Laurasiatheria</taxon>
        <taxon>Artiodactyla</taxon>
        <taxon>Ruminantia</taxon>
        <taxon>Pecora</taxon>
        <taxon>Bovidae</taxon>
        <taxon>Bovinae</taxon>
        <taxon>Bos</taxon>
    </lineage>
</organism>